<gene>
    <name evidence="2" type="primary">slc39a10</name>
    <name type="synonym">zip10</name>
    <name type="ORF">zgc:63552</name>
</gene>
<sequence>MMRVHTHTRLCFLCVLTLLYHQCSHCHEGGSHHHHGHNHGDHDHIHSDLQISEMSCNGLSDRLVHGSQGEPAENEQRYYIHQLFCRYGQKDRLDFKGFQSLLLSLGLGEVRVVGLEHEDLGHDHVAHLDILEVQDGRHSHSAGHPHSHQNPNISHKTHQHSHHENEEHTLAEDVPCSKTLGTGATPPSVSEEHDHDHEHDHDHDKDSDHEHNHRHVTDSPQTQDHEHDHIHLHTHSHKQDSDVTQRLELDHDQKSREHAQEHNDLSDQNHHHHDHHHHKHPHPHLHAPESVVHTTSAMPKIQPSVPPELPANQTRRHRRPSKVKAHRGRNRTSVTVTQAVELETSGDDHEHSLQDHSPAQQQRGRREVPGSPAHGVLHQHEECLNLTQLLHQYGLSSDSLISPVQFTYLCPALLYQIDRRFCILHYHHVEAEEQVAPSSGWVWMWGFVSITIISLLSLLGVVLVPILNQSCFKFLLTFLVALAVGTLSGDALLHLLPHSQGDHDHNHGEQMEEEPEVDFLIKFDGVWKGLTALAGIYLLFIIEHCIGMFKHYSDQRGGLCHKKKKGEQAKIGRKLSDHKLNRRSDAEWLHLKPLTEGDGTTCEAGHNDTQMTELQPLDSPSKMPLNISDSDHPYEAPVKTEEDNVPKAKSKKHGHGHGHGHGHGHGHSHHGHCHSDQEMKDAGIASIAWMVIMGDGMHNFSDGLAIGAAFSANITGGISTSVAVFCHELPHELGDFAVLLKAGMSVKQAIVYNLLSALMAYAGMVIGTAVGQYTHNVTSWIFAVTAGMFLYVALVDMLPEMLHGDSEEHKRCEMGHFVLQNFGMLTGFGIMLLIAIFEDHIVLDFGF</sequence>
<organism>
    <name type="scientific">Danio rerio</name>
    <name type="common">Zebrafish</name>
    <name type="synonym">Brachydanio rerio</name>
    <dbReference type="NCBI Taxonomy" id="7955"/>
    <lineage>
        <taxon>Eukaryota</taxon>
        <taxon>Metazoa</taxon>
        <taxon>Chordata</taxon>
        <taxon>Craniata</taxon>
        <taxon>Vertebrata</taxon>
        <taxon>Euteleostomi</taxon>
        <taxon>Actinopterygii</taxon>
        <taxon>Neopterygii</taxon>
        <taxon>Teleostei</taxon>
        <taxon>Ostariophysi</taxon>
        <taxon>Cypriniformes</taxon>
        <taxon>Danionidae</taxon>
        <taxon>Danioninae</taxon>
        <taxon>Danio</taxon>
    </lineage>
</organism>
<feature type="signal peptide" evidence="3">
    <location>
        <begin position="1"/>
        <end position="26"/>
    </location>
</feature>
<feature type="chain" id="PRO_0000297634" description="Zinc transporter ZIP10">
    <location>
        <begin position="27"/>
        <end position="847"/>
    </location>
</feature>
<feature type="transmembrane region" description="Helical" evidence="3">
    <location>
        <begin position="447"/>
        <end position="467"/>
    </location>
</feature>
<feature type="transmembrane region" description="Helical" evidence="3">
    <location>
        <begin position="474"/>
        <end position="494"/>
    </location>
</feature>
<feature type="transmembrane region" description="Helical" evidence="3">
    <location>
        <begin position="529"/>
        <end position="549"/>
    </location>
</feature>
<feature type="transmembrane region" description="Helical" evidence="3">
    <location>
        <begin position="705"/>
        <end position="725"/>
    </location>
</feature>
<feature type="transmembrane region" description="Helical" evidence="3">
    <location>
        <begin position="750"/>
        <end position="770"/>
    </location>
</feature>
<feature type="transmembrane region" description="Helical" evidence="3">
    <location>
        <begin position="779"/>
        <end position="799"/>
    </location>
</feature>
<feature type="transmembrane region" description="Helical" evidence="3">
    <location>
        <begin position="817"/>
        <end position="837"/>
    </location>
</feature>
<feature type="region of interest" description="Disordered" evidence="4">
    <location>
        <begin position="136"/>
        <end position="374"/>
    </location>
</feature>
<feature type="region of interest" description="Disordered" evidence="4">
    <location>
        <begin position="613"/>
        <end position="676"/>
    </location>
</feature>
<feature type="compositionally biased region" description="Basic and acidic residues" evidence="4">
    <location>
        <begin position="162"/>
        <end position="171"/>
    </location>
</feature>
<feature type="compositionally biased region" description="Polar residues" evidence="4">
    <location>
        <begin position="179"/>
        <end position="188"/>
    </location>
</feature>
<feature type="compositionally biased region" description="Basic and acidic residues" evidence="4">
    <location>
        <begin position="190"/>
        <end position="269"/>
    </location>
</feature>
<feature type="compositionally biased region" description="Basic residues" evidence="4">
    <location>
        <begin position="270"/>
        <end position="285"/>
    </location>
</feature>
<feature type="compositionally biased region" description="Basic residues" evidence="4">
    <location>
        <begin position="314"/>
        <end position="330"/>
    </location>
</feature>
<feature type="compositionally biased region" description="Basic and acidic residues" evidence="4">
    <location>
        <begin position="629"/>
        <end position="646"/>
    </location>
</feature>
<feature type="compositionally biased region" description="Basic residues" evidence="4">
    <location>
        <begin position="648"/>
        <end position="672"/>
    </location>
</feature>
<feature type="glycosylation site" description="N-linked (GlcNAc...) asparagine" evidence="3">
    <location>
        <position position="385"/>
    </location>
</feature>
<feature type="sequence conflict" description="In Ref. 2; AAH58056." evidence="7" ref="2">
    <original>D</original>
    <variation>E</variation>
    <location>
        <position position="119"/>
    </location>
</feature>
<evidence type="ECO:0000250" key="1">
    <source>
        <dbReference type="UniProtKB" id="Q6P5F6"/>
    </source>
</evidence>
<evidence type="ECO:0000250" key="2">
    <source>
        <dbReference type="UniProtKB" id="Q9ULF5"/>
    </source>
</evidence>
<evidence type="ECO:0000255" key="3"/>
<evidence type="ECO:0000256" key="4">
    <source>
        <dbReference type="SAM" id="MobiDB-lite"/>
    </source>
</evidence>
<evidence type="ECO:0000269" key="5">
    <source>
    </source>
</evidence>
<evidence type="ECO:0000269" key="6">
    <source>
    </source>
</evidence>
<evidence type="ECO:0000305" key="7"/>
<reference key="1">
    <citation type="journal article" date="2013" name="Nature">
        <title>The zebrafish reference genome sequence and its relationship to the human genome.</title>
        <authorList>
            <person name="Howe K."/>
            <person name="Clark M.D."/>
            <person name="Torroja C.F."/>
            <person name="Torrance J."/>
            <person name="Berthelot C."/>
            <person name="Muffato M."/>
            <person name="Collins J.E."/>
            <person name="Humphray S."/>
            <person name="McLaren K."/>
            <person name="Matthews L."/>
            <person name="McLaren S."/>
            <person name="Sealy I."/>
            <person name="Caccamo M."/>
            <person name="Churcher C."/>
            <person name="Scott C."/>
            <person name="Barrett J.C."/>
            <person name="Koch R."/>
            <person name="Rauch G.J."/>
            <person name="White S."/>
            <person name="Chow W."/>
            <person name="Kilian B."/>
            <person name="Quintais L.T."/>
            <person name="Guerra-Assuncao J.A."/>
            <person name="Zhou Y."/>
            <person name="Gu Y."/>
            <person name="Yen J."/>
            <person name="Vogel J.H."/>
            <person name="Eyre T."/>
            <person name="Redmond S."/>
            <person name="Banerjee R."/>
            <person name="Chi J."/>
            <person name="Fu B."/>
            <person name="Langley E."/>
            <person name="Maguire S.F."/>
            <person name="Laird G.K."/>
            <person name="Lloyd D."/>
            <person name="Kenyon E."/>
            <person name="Donaldson S."/>
            <person name="Sehra H."/>
            <person name="Almeida-King J."/>
            <person name="Loveland J."/>
            <person name="Trevanion S."/>
            <person name="Jones M."/>
            <person name="Quail M."/>
            <person name="Willey D."/>
            <person name="Hunt A."/>
            <person name="Burton J."/>
            <person name="Sims S."/>
            <person name="McLay K."/>
            <person name="Plumb B."/>
            <person name="Davis J."/>
            <person name="Clee C."/>
            <person name="Oliver K."/>
            <person name="Clark R."/>
            <person name="Riddle C."/>
            <person name="Elliot D."/>
            <person name="Threadgold G."/>
            <person name="Harden G."/>
            <person name="Ware D."/>
            <person name="Begum S."/>
            <person name="Mortimore B."/>
            <person name="Kerry G."/>
            <person name="Heath P."/>
            <person name="Phillimore B."/>
            <person name="Tracey A."/>
            <person name="Corby N."/>
            <person name="Dunn M."/>
            <person name="Johnson C."/>
            <person name="Wood J."/>
            <person name="Clark S."/>
            <person name="Pelan S."/>
            <person name="Griffiths G."/>
            <person name="Smith M."/>
            <person name="Glithero R."/>
            <person name="Howden P."/>
            <person name="Barker N."/>
            <person name="Lloyd C."/>
            <person name="Stevens C."/>
            <person name="Harley J."/>
            <person name="Holt K."/>
            <person name="Panagiotidis G."/>
            <person name="Lovell J."/>
            <person name="Beasley H."/>
            <person name="Henderson C."/>
            <person name="Gordon D."/>
            <person name="Auger K."/>
            <person name="Wright D."/>
            <person name="Collins J."/>
            <person name="Raisen C."/>
            <person name="Dyer L."/>
            <person name="Leung K."/>
            <person name="Robertson L."/>
            <person name="Ambridge K."/>
            <person name="Leongamornlert D."/>
            <person name="McGuire S."/>
            <person name="Gilderthorp R."/>
            <person name="Griffiths C."/>
            <person name="Manthravadi D."/>
            <person name="Nichol S."/>
            <person name="Barker G."/>
            <person name="Whitehead S."/>
            <person name="Kay M."/>
            <person name="Brown J."/>
            <person name="Murnane C."/>
            <person name="Gray E."/>
            <person name="Humphries M."/>
            <person name="Sycamore N."/>
            <person name="Barker D."/>
            <person name="Saunders D."/>
            <person name="Wallis J."/>
            <person name="Babbage A."/>
            <person name="Hammond S."/>
            <person name="Mashreghi-Mohammadi M."/>
            <person name="Barr L."/>
            <person name="Martin S."/>
            <person name="Wray P."/>
            <person name="Ellington A."/>
            <person name="Matthews N."/>
            <person name="Ellwood M."/>
            <person name="Woodmansey R."/>
            <person name="Clark G."/>
            <person name="Cooper J."/>
            <person name="Tromans A."/>
            <person name="Grafham D."/>
            <person name="Skuce C."/>
            <person name="Pandian R."/>
            <person name="Andrews R."/>
            <person name="Harrison E."/>
            <person name="Kimberley A."/>
            <person name="Garnett J."/>
            <person name="Fosker N."/>
            <person name="Hall R."/>
            <person name="Garner P."/>
            <person name="Kelly D."/>
            <person name="Bird C."/>
            <person name="Palmer S."/>
            <person name="Gehring I."/>
            <person name="Berger A."/>
            <person name="Dooley C.M."/>
            <person name="Ersan-Urun Z."/>
            <person name="Eser C."/>
            <person name="Geiger H."/>
            <person name="Geisler M."/>
            <person name="Karotki L."/>
            <person name="Kirn A."/>
            <person name="Konantz J."/>
            <person name="Konantz M."/>
            <person name="Oberlander M."/>
            <person name="Rudolph-Geiger S."/>
            <person name="Teucke M."/>
            <person name="Lanz C."/>
            <person name="Raddatz G."/>
            <person name="Osoegawa K."/>
            <person name="Zhu B."/>
            <person name="Rapp A."/>
            <person name="Widaa S."/>
            <person name="Langford C."/>
            <person name="Yang F."/>
            <person name="Schuster S.C."/>
            <person name="Carter N.P."/>
            <person name="Harrow J."/>
            <person name="Ning Z."/>
            <person name="Herrero J."/>
            <person name="Searle S.M."/>
            <person name="Enright A."/>
            <person name="Geisler R."/>
            <person name="Plasterk R.H."/>
            <person name="Lee C."/>
            <person name="Westerfield M."/>
            <person name="de Jong P.J."/>
            <person name="Zon L.I."/>
            <person name="Postlethwait J.H."/>
            <person name="Nusslein-Volhard C."/>
            <person name="Hubbard T.J."/>
            <person name="Roest Crollius H."/>
            <person name="Rogers J."/>
            <person name="Stemple D.L."/>
        </authorList>
    </citation>
    <scope>NUCLEOTIDE SEQUENCE [LARGE SCALE GENOMIC DNA]</scope>
    <source>
        <strain>Tuebingen</strain>
    </source>
</reference>
<reference key="2">
    <citation type="submission" date="2003-09" db="EMBL/GenBank/DDBJ databases">
        <authorList>
            <consortium name="NIH - Zebrafish Gene Collection (ZGC) project"/>
        </authorList>
    </citation>
    <scope>NUCLEOTIDE SEQUENCE [LARGE SCALE MRNA]</scope>
    <source>
        <strain>AB</strain>
    </source>
</reference>
<reference key="3">
    <citation type="journal article" date="2008" name="Physiol. Genomics">
        <title>Regulation of ZIP and ZnT zinc transporters in zebrafish gill: zinc repression of ZIP10 transcription by an intronic MRE cluster.</title>
        <authorList>
            <person name="Zheng D."/>
            <person name="Feeney G.P."/>
            <person name="Kille P."/>
            <person name="Hogstrand C."/>
        </authorList>
    </citation>
    <scope>FUNCTION</scope>
    <scope>TRANSPORTER ACTIVITY</scope>
</reference>
<reference key="4">
    <citation type="journal article" date="2016" name="Biochem. J.">
        <title>Zinc transporter ZIP10 forms a heteromer with ZIP6 which regulates embryonic development and cell migration.</title>
        <authorList>
            <person name="Taylor K.M."/>
            <person name="Muraina I.A."/>
            <person name="Brethour D."/>
            <person name="Schmitt-Ulms G."/>
            <person name="Nimmanon T."/>
            <person name="Ziliotto S."/>
            <person name="Kille P."/>
            <person name="Hogstrand C."/>
        </authorList>
    </citation>
    <scope>DISRUPTION PHENOTYPE</scope>
    <scope>FUNCTION</scope>
</reference>
<accession>Q6PEH9</accession>
<accession>A0A8M2BF20</accession>
<accession>F1QP98</accession>
<keyword id="KW-1003">Cell membrane</keyword>
<keyword id="KW-0325">Glycoprotein</keyword>
<keyword id="KW-0406">Ion transport</keyword>
<keyword id="KW-0472">Membrane</keyword>
<keyword id="KW-1185">Reference proteome</keyword>
<keyword id="KW-0732">Signal</keyword>
<keyword id="KW-0812">Transmembrane</keyword>
<keyword id="KW-1133">Transmembrane helix</keyword>
<keyword id="KW-0813">Transport</keyword>
<keyword id="KW-0862">Zinc</keyword>
<keyword id="KW-0864">Zinc transport</keyword>
<name>S39AA_DANRE</name>
<dbReference type="EMBL" id="BC058056">
    <property type="protein sequence ID" value="AAH58056.1"/>
    <property type="molecule type" value="mRNA"/>
</dbReference>
<dbReference type="EMBL" id="CR936498">
    <property type="status" value="NOT_ANNOTATED_CDS"/>
    <property type="molecule type" value="Genomic_DNA"/>
</dbReference>
<dbReference type="RefSeq" id="NP_956965.1">
    <property type="nucleotide sequence ID" value="NM_200671.1"/>
</dbReference>
<dbReference type="RefSeq" id="XP_005167603.2">
    <property type="nucleotide sequence ID" value="XM_005167546.5"/>
</dbReference>
<dbReference type="RefSeq" id="XP_005167604.1">
    <property type="nucleotide sequence ID" value="XM_005167547.5"/>
</dbReference>
<dbReference type="RefSeq" id="XP_068079451.1">
    <property type="nucleotide sequence ID" value="XM_068223350.1"/>
</dbReference>
<dbReference type="FunCoup" id="Q6PEH9">
    <property type="interactions" value="1739"/>
</dbReference>
<dbReference type="STRING" id="7955.ENSDARP00000035851"/>
<dbReference type="GlyCosmos" id="Q6PEH9">
    <property type="glycosylation" value="1 site, No reported glycans"/>
</dbReference>
<dbReference type="PaxDb" id="7955-ENSDARP00000035851"/>
<dbReference type="Ensembl" id="ENSDART00000037025">
    <property type="protein sequence ID" value="ENSDARP00000035851"/>
    <property type="gene ID" value="ENSDARG00000005823"/>
</dbReference>
<dbReference type="GeneID" id="393644"/>
<dbReference type="KEGG" id="dre:393644"/>
<dbReference type="AGR" id="ZFIN:ZDB-GENE-040426-1157"/>
<dbReference type="CTD" id="57181"/>
<dbReference type="ZFIN" id="ZDB-GENE-040426-1157">
    <property type="gene designation" value="slc39a10"/>
</dbReference>
<dbReference type="eggNOG" id="KOG2693">
    <property type="taxonomic scope" value="Eukaryota"/>
</dbReference>
<dbReference type="HOGENOM" id="CLU_015114_13_2_1"/>
<dbReference type="InParanoid" id="Q6PEH9"/>
<dbReference type="OrthoDB" id="200954at2759"/>
<dbReference type="PhylomeDB" id="Q6PEH9"/>
<dbReference type="TreeFam" id="TF318470"/>
<dbReference type="PRO" id="PR:Q6PEH9"/>
<dbReference type="Proteomes" id="UP000000437">
    <property type="component" value="Chromosome 9"/>
</dbReference>
<dbReference type="Bgee" id="ENSDARG00000005823">
    <property type="expression patterns" value="Expressed in intestine and 27 other cell types or tissues"/>
</dbReference>
<dbReference type="GO" id="GO:0016324">
    <property type="term" value="C:apical plasma membrane"/>
    <property type="evidence" value="ECO:0000250"/>
    <property type="project" value="UniProtKB"/>
</dbReference>
<dbReference type="GO" id="GO:0005886">
    <property type="term" value="C:plasma membrane"/>
    <property type="evidence" value="ECO:0000250"/>
    <property type="project" value="UniProtKB"/>
</dbReference>
<dbReference type="GO" id="GO:0140410">
    <property type="term" value="F:monoatomic cation:bicarbonate symporter activity"/>
    <property type="evidence" value="ECO:0000318"/>
    <property type="project" value="GO_Central"/>
</dbReference>
<dbReference type="GO" id="GO:0005385">
    <property type="term" value="F:zinc ion transmembrane transporter activity"/>
    <property type="evidence" value="ECO:0000314"/>
    <property type="project" value="ZFIN"/>
</dbReference>
<dbReference type="GO" id="GO:0055113">
    <property type="term" value="P:epiboly involved in gastrulation with mouth forming second"/>
    <property type="evidence" value="ECO:0000315"/>
    <property type="project" value="ZFIN"/>
</dbReference>
<dbReference type="GO" id="GO:0001837">
    <property type="term" value="P:epithelial to mesenchymal transition"/>
    <property type="evidence" value="ECO:0000315"/>
    <property type="project" value="UniProtKB"/>
</dbReference>
<dbReference type="GO" id="GO:0030003">
    <property type="term" value="P:intracellular monoatomic cation homeostasis"/>
    <property type="evidence" value="ECO:0000318"/>
    <property type="project" value="GO_Central"/>
</dbReference>
<dbReference type="GO" id="GO:0010043">
    <property type="term" value="P:response to zinc ion"/>
    <property type="evidence" value="ECO:0000314"/>
    <property type="project" value="ZFIN"/>
</dbReference>
<dbReference type="GO" id="GO:0071578">
    <property type="term" value="P:zinc ion import across plasma membrane"/>
    <property type="evidence" value="ECO:0000318"/>
    <property type="project" value="GO_Central"/>
</dbReference>
<dbReference type="GO" id="GO:0006829">
    <property type="term" value="P:zinc ion transport"/>
    <property type="evidence" value="ECO:0000314"/>
    <property type="project" value="ZFIN"/>
</dbReference>
<dbReference type="InterPro" id="IPR003689">
    <property type="entry name" value="ZIP"/>
</dbReference>
<dbReference type="InterPro" id="IPR050799">
    <property type="entry name" value="ZIP_Transporter"/>
</dbReference>
<dbReference type="PANTHER" id="PTHR12191">
    <property type="entry name" value="SOLUTE CARRIER FAMILY 39"/>
    <property type="match status" value="1"/>
</dbReference>
<dbReference type="PANTHER" id="PTHR12191:SF14">
    <property type="entry name" value="ZINC TRANSPORTER ZIP10"/>
    <property type="match status" value="1"/>
</dbReference>
<dbReference type="Pfam" id="PF02535">
    <property type="entry name" value="Zip"/>
    <property type="match status" value="1"/>
</dbReference>
<proteinExistence type="evidence at transcript level"/>
<comment type="function">
    <text evidence="1 2 5 6">Zinc-influx transporter (PubMed:18477665). When associated with slc39a6, the heterodimer slc39a10/slc39a6 has a functional role in epithelial-mesenchymal transition (EMT) during embryonic development (PubMed:27274087). Slc39a10/slc39a6 heterodimers play also an essentiel role in initiating mitosis by importing zinc into cells to initiate a pathway resulting in the onset of mitosis (By similarity). When associated with slc39a6, the heterodimer controls Ncam1 phosphorylation and integration into focal adhesion complexes during EMT (By similarity).</text>
</comment>
<comment type="catalytic activity">
    <reaction evidence="5">
        <text>Zn(2+)(in) = Zn(2+)(out)</text>
        <dbReference type="Rhea" id="RHEA:29351"/>
        <dbReference type="ChEBI" id="CHEBI:29105"/>
    </reaction>
    <physiologicalReaction direction="right-to-left" evidence="5">
        <dbReference type="Rhea" id="RHEA:29353"/>
    </physiologicalReaction>
</comment>
<comment type="subcellular location">
    <subcellularLocation>
        <location evidence="2">Cell membrane</location>
        <topology evidence="3">Multi-pass membrane protein</topology>
    </subcellularLocation>
    <subcellularLocation>
        <location evidence="2">Apical cell membrane</location>
        <topology evidence="3">Multi-pass membrane protein</topology>
    </subcellularLocation>
</comment>
<comment type="PTM">
    <text evidence="2">Undergoes N-terminal ectodomain shedding.</text>
</comment>
<comment type="disruption phenotype">
    <text evidence="6">Morpholino knockdown of the protein causes delayed epiboly and deformities of the head, eye, heart and tail.</text>
</comment>
<comment type="similarity">
    <text evidence="7">Belongs to the ZIP transporter (TC 2.A.5) family.</text>
</comment>
<protein>
    <recommendedName>
        <fullName evidence="2">Zinc transporter ZIP10</fullName>
    </recommendedName>
    <alternativeName>
        <fullName>Solute carrier family 39 member 10</fullName>
    </alternativeName>
    <alternativeName>
        <fullName>Zrt- and Irt-like protein 10</fullName>
        <shortName>ZIP-10</shortName>
    </alternativeName>
</protein>